<evidence type="ECO:0000250" key="1"/>
<evidence type="ECO:0000255" key="2"/>
<evidence type="ECO:0000255" key="3">
    <source>
        <dbReference type="PROSITE-ProRule" id="PRU00239"/>
    </source>
</evidence>
<evidence type="ECO:0000269" key="4">
    <source>
    </source>
</evidence>
<evidence type="ECO:0000269" key="5">
    <source>
    </source>
</evidence>
<evidence type="ECO:0000269" key="6">
    <source>
    </source>
</evidence>
<evidence type="ECO:0000303" key="7">
    <source>
    </source>
</evidence>
<evidence type="ECO:0000305" key="8"/>
<keyword id="KW-0025">Alternative splicing</keyword>
<keyword id="KW-0068">Autocatalytic cleavage</keyword>
<keyword id="KW-0106">Calcium</keyword>
<keyword id="KW-0963">Cytoplasm</keyword>
<keyword id="KW-0333">Golgi apparatus</keyword>
<keyword id="KW-0378">Hydrolase</keyword>
<keyword id="KW-0479">Metal-binding</keyword>
<keyword id="KW-0645">Protease</keyword>
<keyword id="KW-1185">Reference proteome</keyword>
<keyword id="KW-0677">Repeat</keyword>
<keyword id="KW-0788">Thiol protease</keyword>
<dbReference type="EC" id="3.4.22.53"/>
<dbReference type="EMBL" id="AB050201">
    <property type="protein sequence ID" value="BAB70479.1"/>
    <property type="molecule type" value="Genomic_DNA"/>
</dbReference>
<dbReference type="EMBL" id="AB050202">
    <property type="protein sequence ID" value="BAB70480.1"/>
    <property type="molecule type" value="mRNA"/>
</dbReference>
<dbReference type="EMBL" id="AB050203">
    <property type="protein sequence ID" value="BAB70481.1"/>
    <property type="molecule type" value="mRNA"/>
</dbReference>
<dbReference type="EMBL" id="AB061518">
    <property type="protein sequence ID" value="BAB55000.1"/>
    <property type="molecule type" value="mRNA"/>
</dbReference>
<dbReference type="EMBL" id="AB061519">
    <property type="protein sequence ID" value="BAB55001.1"/>
    <property type="molecule type" value="mRNA"/>
</dbReference>
<dbReference type="EMBL" id="BC125504">
    <property type="protein sequence ID" value="AAI25505.1"/>
    <property type="molecule type" value="mRNA"/>
</dbReference>
<dbReference type="EMBL" id="BC125508">
    <property type="protein sequence ID" value="AAI25509.1"/>
    <property type="molecule type" value="mRNA"/>
</dbReference>
<dbReference type="CCDS" id="CCDS35814.1">
    <molecule id="Q91VA3-1"/>
</dbReference>
<dbReference type="CCDS" id="CCDS48477.1">
    <molecule id="Q91VA3-2"/>
</dbReference>
<dbReference type="RefSeq" id="NP_001139278.1">
    <molecule id="Q91VA3-2"/>
    <property type="nucleotide sequence ID" value="NM_001145806.1"/>
</dbReference>
<dbReference type="RefSeq" id="NP_570960.2">
    <property type="nucleotide sequence ID" value="NM_130890.2"/>
</dbReference>
<dbReference type="SMR" id="Q91VA3"/>
<dbReference type="CORUM" id="Q91VA3"/>
<dbReference type="FunCoup" id="Q91VA3">
    <property type="interactions" value="305"/>
</dbReference>
<dbReference type="STRING" id="10090.ENSMUSP00000047164"/>
<dbReference type="MEROPS" id="C02.007"/>
<dbReference type="PhosphoSitePlus" id="Q91VA3"/>
<dbReference type="jPOST" id="Q91VA3"/>
<dbReference type="PaxDb" id="10090-ENSMUSP00000047164"/>
<dbReference type="PeptideAtlas" id="Q91VA3"/>
<dbReference type="ProteomicsDB" id="281767">
    <molecule id="Q91VA3-1"/>
</dbReference>
<dbReference type="ProteomicsDB" id="281768">
    <molecule id="Q91VA3-2"/>
</dbReference>
<dbReference type="Antibodypedia" id="61692">
    <property type="antibodies" value="67 antibodies from 15 providers"/>
</dbReference>
<dbReference type="DNASU" id="170725"/>
<dbReference type="Ensembl" id="ENSMUST00000168514.7">
    <molecule id="Q91VA3-2"/>
    <property type="protein sequence ID" value="ENSMUSP00000129549.2"/>
    <property type="gene ID" value="ENSMUSG00000038599.15"/>
</dbReference>
<dbReference type="GeneID" id="170725"/>
<dbReference type="KEGG" id="mmu:170725"/>
<dbReference type="UCSC" id="uc007dyh.2">
    <molecule id="Q91VA3-2"/>
    <property type="organism name" value="mouse"/>
</dbReference>
<dbReference type="UCSC" id="uc007dyi.2">
    <molecule id="Q91VA3-1"/>
    <property type="organism name" value="mouse"/>
</dbReference>
<dbReference type="AGR" id="MGI:2181366"/>
<dbReference type="CTD" id="388743"/>
<dbReference type="MGI" id="MGI:2181366">
    <property type="gene designation" value="Capn8"/>
</dbReference>
<dbReference type="VEuPathDB" id="HostDB:ENSMUSG00000038599"/>
<dbReference type="eggNOG" id="KOG0045">
    <property type="taxonomic scope" value="Eukaryota"/>
</dbReference>
<dbReference type="GeneTree" id="ENSGT00940000160090"/>
<dbReference type="HOGENOM" id="CLU_010982_3_4_1"/>
<dbReference type="InParanoid" id="Q91VA3"/>
<dbReference type="OrthoDB" id="424753at2759"/>
<dbReference type="PhylomeDB" id="Q91VA3"/>
<dbReference type="TreeFam" id="TF314748"/>
<dbReference type="BRENDA" id="3.4.22.B28">
    <property type="organism ID" value="3474"/>
</dbReference>
<dbReference type="Reactome" id="R-MMU-1474228">
    <property type="pathway name" value="Degradation of the extracellular matrix"/>
</dbReference>
<dbReference type="BioGRID-ORCS" id="170725">
    <property type="hits" value="1 hit in 78 CRISPR screens"/>
</dbReference>
<dbReference type="ChiTaRS" id="Capn10">
    <property type="organism name" value="mouse"/>
</dbReference>
<dbReference type="PRO" id="PR:Q91VA3"/>
<dbReference type="Proteomes" id="UP000000589">
    <property type="component" value="Chromosome 1"/>
</dbReference>
<dbReference type="RNAct" id="Q91VA3">
    <property type="molecule type" value="protein"/>
</dbReference>
<dbReference type="Bgee" id="ENSMUSG00000038599">
    <property type="expression patterns" value="Expressed in pyloric antrum and 23 other cell types or tissues"/>
</dbReference>
<dbReference type="ExpressionAtlas" id="Q91VA3">
    <property type="expression patterns" value="baseline and differential"/>
</dbReference>
<dbReference type="GO" id="GO:0005794">
    <property type="term" value="C:Golgi apparatus"/>
    <property type="evidence" value="ECO:0007669"/>
    <property type="project" value="UniProtKB-SubCell"/>
</dbReference>
<dbReference type="GO" id="GO:0004198">
    <property type="term" value="F:calcium-dependent cysteine-type endopeptidase activity"/>
    <property type="evidence" value="ECO:0000314"/>
    <property type="project" value="MGI"/>
</dbReference>
<dbReference type="GO" id="GO:0042802">
    <property type="term" value="F:identical protein binding"/>
    <property type="evidence" value="ECO:0000353"/>
    <property type="project" value="MGI"/>
</dbReference>
<dbReference type="GO" id="GO:0046872">
    <property type="term" value="F:metal ion binding"/>
    <property type="evidence" value="ECO:0007669"/>
    <property type="project" value="UniProtKB-KW"/>
</dbReference>
<dbReference type="GO" id="GO:1990092">
    <property type="term" value="P:calcium-dependent self proteolysis"/>
    <property type="evidence" value="ECO:0000314"/>
    <property type="project" value="MGI"/>
</dbReference>
<dbReference type="CDD" id="cd00214">
    <property type="entry name" value="Calpain_III"/>
    <property type="match status" value="1"/>
</dbReference>
<dbReference type="CDD" id="cd00044">
    <property type="entry name" value="CysPc"/>
    <property type="match status" value="1"/>
</dbReference>
<dbReference type="FunFam" id="2.60.120.380:FF:000001">
    <property type="entry name" value="Calpain-1 catalytic subunit"/>
    <property type="match status" value="1"/>
</dbReference>
<dbReference type="FunFam" id="3.90.70.10:FF:000001">
    <property type="entry name" value="Calpain-1 catalytic subunit"/>
    <property type="match status" value="1"/>
</dbReference>
<dbReference type="FunFam" id="1.10.238.10:FF:000099">
    <property type="entry name" value="calpain-2 catalytic subunit"/>
    <property type="match status" value="1"/>
</dbReference>
<dbReference type="Gene3D" id="2.60.120.380">
    <property type="match status" value="1"/>
</dbReference>
<dbReference type="Gene3D" id="3.90.70.10">
    <property type="entry name" value="Cysteine proteinases"/>
    <property type="match status" value="1"/>
</dbReference>
<dbReference type="Gene3D" id="1.10.238.10">
    <property type="entry name" value="EF-hand"/>
    <property type="match status" value="1"/>
</dbReference>
<dbReference type="InterPro" id="IPR033883">
    <property type="entry name" value="C2_III"/>
</dbReference>
<dbReference type="InterPro" id="IPR022684">
    <property type="entry name" value="Calpain_cysteine_protease"/>
</dbReference>
<dbReference type="InterPro" id="IPR022682">
    <property type="entry name" value="Calpain_domain_III"/>
</dbReference>
<dbReference type="InterPro" id="IPR022683">
    <property type="entry name" value="Calpain_III"/>
</dbReference>
<dbReference type="InterPro" id="IPR036213">
    <property type="entry name" value="Calpain_III_sf"/>
</dbReference>
<dbReference type="InterPro" id="IPR011992">
    <property type="entry name" value="EF-hand-dom_pair"/>
</dbReference>
<dbReference type="InterPro" id="IPR038765">
    <property type="entry name" value="Papain-like_cys_pep_sf"/>
</dbReference>
<dbReference type="InterPro" id="IPR000169">
    <property type="entry name" value="Pept_cys_AS"/>
</dbReference>
<dbReference type="InterPro" id="IPR001300">
    <property type="entry name" value="Peptidase_C2_calpain_cat"/>
</dbReference>
<dbReference type="PANTHER" id="PTHR10183">
    <property type="entry name" value="CALPAIN"/>
    <property type="match status" value="1"/>
</dbReference>
<dbReference type="PANTHER" id="PTHR10183:SF374">
    <property type="entry name" value="CALPAIN-8"/>
    <property type="match status" value="1"/>
</dbReference>
<dbReference type="Pfam" id="PF01067">
    <property type="entry name" value="Calpain_III"/>
    <property type="match status" value="1"/>
</dbReference>
<dbReference type="Pfam" id="PF00648">
    <property type="entry name" value="Peptidase_C2"/>
    <property type="match status" value="1"/>
</dbReference>
<dbReference type="PRINTS" id="PR00704">
    <property type="entry name" value="CALPAIN"/>
</dbReference>
<dbReference type="SMART" id="SM00720">
    <property type="entry name" value="calpain_III"/>
    <property type="match status" value="1"/>
</dbReference>
<dbReference type="SMART" id="SM00230">
    <property type="entry name" value="CysPc"/>
    <property type="match status" value="1"/>
</dbReference>
<dbReference type="SUPFAM" id="SSF49758">
    <property type="entry name" value="Calpain large subunit, middle domain (domain III)"/>
    <property type="match status" value="1"/>
</dbReference>
<dbReference type="SUPFAM" id="SSF54001">
    <property type="entry name" value="Cysteine proteinases"/>
    <property type="match status" value="1"/>
</dbReference>
<dbReference type="SUPFAM" id="SSF47473">
    <property type="entry name" value="EF-hand"/>
    <property type="match status" value="1"/>
</dbReference>
<dbReference type="PROSITE" id="PS50203">
    <property type="entry name" value="CALPAIN_CAT"/>
    <property type="match status" value="1"/>
</dbReference>
<dbReference type="PROSITE" id="PS00139">
    <property type="entry name" value="THIOL_PROTEASE_CYS"/>
    <property type="match status" value="1"/>
</dbReference>
<organism>
    <name type="scientific">Mus musculus</name>
    <name type="common">Mouse</name>
    <dbReference type="NCBI Taxonomy" id="10090"/>
    <lineage>
        <taxon>Eukaryota</taxon>
        <taxon>Metazoa</taxon>
        <taxon>Chordata</taxon>
        <taxon>Craniata</taxon>
        <taxon>Vertebrata</taxon>
        <taxon>Euteleostomi</taxon>
        <taxon>Mammalia</taxon>
        <taxon>Eutheria</taxon>
        <taxon>Euarchontoglires</taxon>
        <taxon>Glires</taxon>
        <taxon>Rodentia</taxon>
        <taxon>Myomorpha</taxon>
        <taxon>Muroidea</taxon>
        <taxon>Muridae</taxon>
        <taxon>Murinae</taxon>
        <taxon>Mus</taxon>
        <taxon>Mus</taxon>
    </lineage>
</organism>
<comment type="function">
    <text evidence="1 5">Calcium-regulated non-lysosomal thiol-protease (By similarity). Involved in membrane trafficking in the gastric surface mucus cells (pit cells) and may involve the membrane trafficking of mucus cells via interactions with coat protein. Proteolytically cleaves the beta-subunit of coatomer complex.</text>
</comment>
<comment type="catalytic activity">
    <reaction>
        <text>Broad endopeptidase specificity.</text>
        <dbReference type="EC" id="3.4.22.53"/>
    </reaction>
</comment>
<comment type="cofactor">
    <cofactor evidence="8">
        <name>Ca(2+)</name>
        <dbReference type="ChEBI" id="CHEBI:29108"/>
    </cofactor>
    <text evidence="8">Binds 2 calcium ions.</text>
</comment>
<comment type="activity regulation">
    <text evidence="6">The concentration of calcium for half-maximal activity is 0.3 mM. Inhibited by calpastatin and calpeptin.</text>
</comment>
<comment type="biophysicochemical properties">
    <phDependence>
        <text evidence="6">Optimum pH is 6.</text>
    </phDependence>
    <temperatureDependence>
        <text evidence="6">Optimum temperature is 20 degrees Celsius.</text>
    </temperatureDependence>
</comment>
<comment type="subunit">
    <text evidence="5 6">Monomer and homooligomer. Interacts with COPS1/GPS1, COPB1, EYA2, NME2, NME4 and TOMM70.</text>
</comment>
<comment type="subcellular location">
    <subcellularLocation>
        <location evidence="1">Cytoplasm</location>
    </subcellularLocation>
    <subcellularLocation>
        <location evidence="5">Golgi apparatus</location>
    </subcellularLocation>
</comment>
<comment type="alternative products">
    <event type="alternative splicing"/>
    <isoform>
        <id>Q91VA3-1</id>
        <name>1</name>
        <name>nCL-2</name>
        <sequence type="displayed"/>
    </isoform>
    <isoform>
        <id>Q91VA3-2</id>
        <name>2</name>
        <name>Calpain 8b</name>
        <name>nCL-2'</name>
        <sequence type="described" ref="VSP_035306 VSP_035307"/>
    </isoform>
</comment>
<comment type="tissue specificity">
    <text evidence="4 5">Predominantly expressed in the stomach. Localizes strictly to the surface mucus cells in the gastric epithelium and the mucus-secreting goblet cells in the duodenum.</text>
</comment>
<comment type="domain">
    <text evidence="6">The domain III mediates oligomerization.</text>
</comment>
<comment type="PTM">
    <text>Undergoes autolytic cleavage between Ala-5 and Ala-6 which gives rise to fragments extending from Ala-6 to the C-terminus, Ala-6 to the EF-hand 2 domain and from Ala-6 to the beginning of domain III.</text>
</comment>
<comment type="similarity">
    <text evidence="8">Belongs to the peptidase C2 family.</text>
</comment>
<protein>
    <recommendedName>
        <fullName>Calpain-8</fullName>
        <ecNumber>3.4.22.53</ecNumber>
    </recommendedName>
    <alternativeName>
        <fullName>New calpain 2</fullName>
        <shortName>nCL-2</shortName>
    </alternativeName>
    <alternativeName>
        <fullName>Stomach-specific M-type calpain</fullName>
    </alternativeName>
</protein>
<sequence>MAALAAGISKQRAAAQGLGSNQNAVKYLGQDFETLRKQCLNSGVLFKDPEFPACPSALGYRDLGPGSAETQGIIWKRPTELCSNPQFIVGGATRTDIRQGGLGDCWLLAAIASLTLNEKLLYRVVPRDQSFQKNYAGIFHFQFWQYGEWVEVVIDDRLPTKNGQLLFLHSEEGNEFWSALLEKAYAKLNGSYEALAGGSTIEGFEDFTGGISEFYDLRKPPGNLYYTIQKALRKGSLLGCSIDVSNAAEAEATTRQKLVKGHAYSVTGVEEVDFRGLPEKLIRLRNPWGEVEWTGAWSDSAPEWNYIDPQKKGELDKRAEDGEFWMSFSDFLKQFSRLEICNLSPDSLSSEEIHKWNLVLFNGRWTRGSTAGGCQNYPATYWTNPQFKIHLDEVDEDQEEGTSEPCCTVLLGLMQKNRRRQRRIGQGMLSIGYAVYQIPKELENHTDEHLGRDFFQGRQPSTCSSTYMNLREVSSRVQLPPGQYLVVPSTFEPFKDGDFCLRVFSEKKAQALEIGDAVPGDPHEPHPRDMDGEDEHFWSLSEEFADKDSEISAHQLKRVLNGLLSKRTDMKFDGFNINTCREMISLLDGDGTGSLRPVEFKTLWLKICKYLEIYQEMDHSRAGTIDAHEMRTALKKAGFTLNNQVQQTIATRYACSKLGVDFDGFVACMIRLEILFKLFRLLDKDQNGIVQLSLAEWLCRALV</sequence>
<proteinExistence type="evidence at protein level"/>
<accession>Q91VA3</accession>
<accession>Q059W1</accession>
<accession>Q91UZ9</accession>
<accession>Q920R7</accession>
<feature type="chain" id="PRO_0000349281" description="Calpain-8">
    <location>
        <begin position="1"/>
        <end position="703"/>
    </location>
</feature>
<feature type="domain" description="Calpain catalytic" evidence="3">
    <location>
        <begin position="45"/>
        <end position="344"/>
    </location>
</feature>
<feature type="domain" description="EF-hand 1">
    <location>
        <begin position="531"/>
        <end position="566"/>
    </location>
</feature>
<feature type="domain" description="EF-hand 2">
    <location>
        <begin position="575"/>
        <end position="610"/>
    </location>
</feature>
<feature type="domain" description="EF-hand 3">
    <location>
        <begin position="605"/>
        <end position="640"/>
    </location>
</feature>
<feature type="domain" description="EF-hand 4">
    <location>
        <begin position="670"/>
        <end position="703"/>
    </location>
</feature>
<feature type="region of interest" description="Domain III">
    <location>
        <begin position="355"/>
        <end position="512"/>
    </location>
</feature>
<feature type="region of interest" description="Linker" evidence="1">
    <location>
        <begin position="513"/>
        <end position="531"/>
    </location>
</feature>
<feature type="region of interest" description="Domain IV" evidence="1">
    <location>
        <begin position="532"/>
        <end position="703"/>
    </location>
</feature>
<feature type="active site" evidence="1">
    <location>
        <position position="105"/>
    </location>
</feature>
<feature type="active site" evidence="1">
    <location>
        <position position="262"/>
    </location>
</feature>
<feature type="active site" evidence="1">
    <location>
        <position position="286"/>
    </location>
</feature>
<feature type="binding site" evidence="2">
    <location>
        <position position="588"/>
    </location>
    <ligand>
        <name>Ca(2+)</name>
        <dbReference type="ChEBI" id="CHEBI:29108"/>
        <label>1</label>
    </ligand>
</feature>
<feature type="binding site" evidence="2">
    <location>
        <position position="590"/>
    </location>
    <ligand>
        <name>Ca(2+)</name>
        <dbReference type="ChEBI" id="CHEBI:29108"/>
        <label>1</label>
    </ligand>
</feature>
<feature type="binding site" evidence="2">
    <location>
        <position position="592"/>
    </location>
    <ligand>
        <name>Ca(2+)</name>
        <dbReference type="ChEBI" id="CHEBI:29108"/>
        <label>1</label>
    </ligand>
</feature>
<feature type="binding site" evidence="2">
    <location>
        <position position="594"/>
    </location>
    <ligand>
        <name>Ca(2+)</name>
        <dbReference type="ChEBI" id="CHEBI:29108"/>
        <label>1</label>
    </ligand>
</feature>
<feature type="binding site" evidence="2">
    <location>
        <position position="599"/>
    </location>
    <ligand>
        <name>Ca(2+)</name>
        <dbReference type="ChEBI" id="CHEBI:29108"/>
        <label>1</label>
    </ligand>
</feature>
<feature type="binding site" evidence="2">
    <location>
        <position position="618"/>
    </location>
    <ligand>
        <name>Ca(2+)</name>
        <dbReference type="ChEBI" id="CHEBI:29108"/>
        <label>2</label>
    </ligand>
</feature>
<feature type="binding site" evidence="2">
    <location>
        <position position="620"/>
    </location>
    <ligand>
        <name>Ca(2+)</name>
        <dbReference type="ChEBI" id="CHEBI:29108"/>
        <label>2</label>
    </ligand>
</feature>
<feature type="binding site" evidence="2">
    <location>
        <position position="624"/>
    </location>
    <ligand>
        <name>Ca(2+)</name>
        <dbReference type="ChEBI" id="CHEBI:29108"/>
        <label>2</label>
    </ligand>
</feature>
<feature type="binding site" evidence="2">
    <location>
        <position position="629"/>
    </location>
    <ligand>
        <name>Ca(2+)</name>
        <dbReference type="ChEBI" id="CHEBI:29108"/>
        <label>2</label>
    </ligand>
</feature>
<feature type="splice variant" id="VSP_035306" description="In isoform 2." evidence="7">
    <original>ATY</original>
    <variation>GSF</variation>
    <location>
        <begin position="379"/>
        <end position="381"/>
    </location>
</feature>
<feature type="splice variant" id="VSP_035307" description="In isoform 2." evidence="7">
    <location>
        <begin position="382"/>
        <end position="703"/>
    </location>
</feature>
<feature type="mutagenesis site" description="Loss of activity." evidence="6">
    <original>C</original>
    <variation>S</variation>
    <location>
        <position position="105"/>
    </location>
</feature>
<feature type="sequence conflict" description="In Ref. 1; BAB70479." evidence="8" ref="1">
    <original>H</original>
    <variation>Q</variation>
    <location>
        <position position="354"/>
    </location>
</feature>
<feature type="sequence conflict" description="In Ref. 2; AAI25505/AAI25509." evidence="8" ref="2">
    <original>P</original>
    <variation>A</variation>
    <location>
        <position position="519"/>
    </location>
</feature>
<feature type="sequence conflict" description="In Ref. 2; AAI25505/AAI25509." evidence="8" ref="2">
    <original>R</original>
    <variation>C</variation>
    <location>
        <position position="700"/>
    </location>
</feature>
<reference key="1">
    <citation type="journal article" date="2001" name="J. Mol. Evol.">
        <title>Both the conserved and the unique gene structure of stomach-specific calpains reveal processes of calpain gene evolution.</title>
        <authorList>
            <person name="Hata S."/>
            <person name="Nishi K."/>
            <person name="Kawamoto T."/>
            <person name="Lee H.-J."/>
            <person name="Kawahara H."/>
            <person name="Maeda T."/>
            <person name="Shintani Y."/>
            <person name="Sorimachi H."/>
            <person name="Suzuki K."/>
        </authorList>
    </citation>
    <scope>NUCLEOTIDE SEQUENCE [GENOMIC DNA / MRNA] (ISOFORMS 1 AND 2)</scope>
    <scope>TISSUE SPECIFICITY</scope>
</reference>
<reference key="2">
    <citation type="journal article" date="2004" name="Genome Res.">
        <title>The status, quality, and expansion of the NIH full-length cDNA project: the Mammalian Gene Collection (MGC).</title>
        <authorList>
            <consortium name="The MGC Project Team"/>
        </authorList>
    </citation>
    <scope>NUCLEOTIDE SEQUENCE [LARGE SCALE MRNA] (ISOFORM 1)</scope>
    <source>
        <tissue>Brain</tissue>
    </source>
</reference>
<reference key="3">
    <citation type="journal article" date="2006" name="J. Biol. Chem.">
        <title>Stomach-specific calpain, nCL-2, localizes in mucus cells and proteolyzes the beta-subunit of coatomer complex, beta-COP.</title>
        <authorList>
            <person name="Hata S."/>
            <person name="Koyama S."/>
            <person name="Kawahara H."/>
            <person name="Doi N."/>
            <person name="Maeda T."/>
            <person name="Toyama-Sorimachi N."/>
            <person name="Abe K."/>
            <person name="Suzuki K."/>
            <person name="Sorimachi H."/>
        </authorList>
    </citation>
    <scope>FUNCTION</scope>
    <scope>INTERACTION WITH COPS1; COPB1; EYA2; NME2; NME4 AND TOMM70</scope>
    <scope>SUBCELLULAR LOCATION</scope>
    <scope>TISSUE SPECIFICITY</scope>
</reference>
<reference key="4">
    <citation type="journal article" date="2007" name="J. Biol. Chem.">
        <title>Stomach-specific calpain, nCL-2/calpain 8, is active without calpain regulatory subunit and oligomerizes through C2-like domains.</title>
        <authorList>
            <person name="Hata S."/>
            <person name="Doi N."/>
            <person name="Kitamura F."/>
            <person name="Sorimachi H."/>
        </authorList>
    </citation>
    <scope>SUBUNIT</scope>
    <scope>ACTIVITY REGULATION</scope>
    <scope>DOMAIN</scope>
    <scope>BIOPHYSICOCHEMICAL PROPERTIES</scope>
    <scope>PTM</scope>
    <scope>MUTAGENESIS OF CYS-105</scope>
</reference>
<name>CAN8_MOUSE</name>
<gene>
    <name type="primary">Capn8</name>
    <name type="synonym">Ncl2</name>
</gene>